<protein>
    <recommendedName>
        <fullName>Lysine-specific demethylase hairless</fullName>
        <ecNumber evidence="2">1.14.11.65</ecNumber>
    </recommendedName>
    <alternativeName>
        <fullName evidence="5">[histone H3]-dimethyl-L-lysine(9) demethylase hairless</fullName>
    </alternativeName>
</protein>
<keyword id="KW-0238">DNA-binding</keyword>
<keyword id="KW-0408">Iron</keyword>
<keyword id="KW-0479">Metal-binding</keyword>
<keyword id="KW-0539">Nucleus</keyword>
<keyword id="KW-0560">Oxidoreductase</keyword>
<keyword id="KW-1185">Reference proteome</keyword>
<keyword id="KW-0804">Transcription</keyword>
<keyword id="KW-0805">Transcription regulation</keyword>
<keyword id="KW-0862">Zinc</keyword>
<keyword id="KW-0863">Zinc-finger</keyword>
<reference key="1">
    <citation type="journal article" date="1994" name="Proc. Natl. Acad. Sci. U.S.A.">
        <title>Structure and expression of the hairless gene of mice.</title>
        <authorList>
            <person name="Cachon-Gonzalez M.B."/>
            <person name="Fenner S."/>
            <person name="Coffin J.M."/>
            <person name="Moran C."/>
            <person name="Best S."/>
            <person name="Stoye J.P."/>
        </authorList>
    </citation>
    <scope>NUCLEOTIDE SEQUENCE [MRNA]</scope>
    <source>
        <strain>BALB/cJ</strain>
        <tissue>Skin</tissue>
    </source>
</reference>
<reference key="2">
    <citation type="journal article" date="2004" name="Genome Res.">
        <title>The status, quality, and expansion of the NIH full-length cDNA project: the Mammalian Gene Collection (MGC).</title>
        <authorList>
            <consortium name="The MGC Project Team"/>
        </authorList>
    </citation>
    <scope>NUCLEOTIDE SEQUENCE [LARGE SCALE MRNA]</scope>
    <source>
        <strain>C57BL/6J</strain>
        <tissue>Retina</tissue>
    </source>
</reference>
<evidence type="ECO:0000250" key="1"/>
<evidence type="ECO:0000250" key="2">
    <source>
        <dbReference type="UniProtKB" id="O43593"/>
    </source>
</evidence>
<evidence type="ECO:0000255" key="3">
    <source>
        <dbReference type="PROSITE-ProRule" id="PRU00538"/>
    </source>
</evidence>
<evidence type="ECO:0000256" key="4">
    <source>
        <dbReference type="SAM" id="MobiDB-lite"/>
    </source>
</evidence>
<evidence type="ECO:0000305" key="5"/>
<comment type="function">
    <text evidence="2">Histone demethylase that specifically demethylates both mono- and dimethylated 'Lys-9' of histone H3. May act as a transcription regulator controlling hair biology (via targeting of collagens), neural activity, and cell cycle.</text>
</comment>
<comment type="catalytic activity">
    <reaction evidence="2">
        <text>N(6),N(6)-dimethyl-L-lysyl(9)-[histone H3] + 2 2-oxoglutarate + 2 O2 = L-lysyl(9)-[histone H3] + 2 formaldehyde + 2 succinate + 2 CO2</text>
        <dbReference type="Rhea" id="RHEA:60188"/>
        <dbReference type="Rhea" id="RHEA-COMP:15541"/>
        <dbReference type="Rhea" id="RHEA-COMP:15546"/>
        <dbReference type="ChEBI" id="CHEBI:15379"/>
        <dbReference type="ChEBI" id="CHEBI:16526"/>
        <dbReference type="ChEBI" id="CHEBI:16810"/>
        <dbReference type="ChEBI" id="CHEBI:16842"/>
        <dbReference type="ChEBI" id="CHEBI:29969"/>
        <dbReference type="ChEBI" id="CHEBI:30031"/>
        <dbReference type="ChEBI" id="CHEBI:61976"/>
        <dbReference type="EC" id="1.14.11.65"/>
    </reaction>
</comment>
<comment type="cofactor">
    <cofactor evidence="1">
        <name>Fe(2+)</name>
        <dbReference type="ChEBI" id="CHEBI:29033"/>
    </cofactor>
    <text evidence="1">Binds 1 Fe(2+) ion per subunit.</text>
</comment>
<comment type="subcellular location">
    <subcellularLocation>
        <location>Nucleus</location>
    </subcellularLocation>
</comment>
<comment type="tissue specificity">
    <text>Expressed predominantly in brain, hair follicles and interfollicular epidermis. No expression in dermis.</text>
</comment>
<comment type="domain">
    <text evidence="1">Contains two Leu-Xaa-Xaa-Leu-Leu (LXXLL) motifs. The LXXLL motifs are essential for the association with nuclear receptors (By similarity).</text>
</comment>
<comment type="domain">
    <text evidence="1">The JmjC domain and the C6-type zinc-finger are required for the demethylation activity.</text>
</comment>
<comment type="disease">
    <text>Defects in Hr are the cause of a number of pleiotropic effects including structural abnormalities of epithelial cells in the hair follicles, hair loss towards the end of the first hair growth cycle, and the failure of subsequent hair growth cycles. Older mice carrying a hr mutation have been reported to possess altered ratios of T-cell-dependent B-cell responses. Mice homozygous for hr mutation are uniquely sensitive to UV and chemically induced skin tumors.</text>
</comment>
<organism>
    <name type="scientific">Mus musculus</name>
    <name type="common">Mouse</name>
    <dbReference type="NCBI Taxonomy" id="10090"/>
    <lineage>
        <taxon>Eukaryota</taxon>
        <taxon>Metazoa</taxon>
        <taxon>Chordata</taxon>
        <taxon>Craniata</taxon>
        <taxon>Vertebrata</taxon>
        <taxon>Euteleostomi</taxon>
        <taxon>Mammalia</taxon>
        <taxon>Eutheria</taxon>
        <taxon>Euarchontoglires</taxon>
        <taxon>Glires</taxon>
        <taxon>Rodentia</taxon>
        <taxon>Myomorpha</taxon>
        <taxon>Muroidea</taxon>
        <taxon>Muridae</taxon>
        <taxon>Murinae</taxon>
        <taxon>Mus</taxon>
        <taxon>Mus</taxon>
    </lineage>
</organism>
<dbReference type="EC" id="1.14.11.65" evidence="2"/>
<dbReference type="EMBL" id="Z32675">
    <property type="protein sequence ID" value="CAA83587.1"/>
    <property type="molecule type" value="mRNA"/>
</dbReference>
<dbReference type="EMBL" id="BC049182">
    <property type="protein sequence ID" value="AAH49182.1"/>
    <property type="molecule type" value="mRNA"/>
</dbReference>
<dbReference type="CCDS" id="CCDS27257.1"/>
<dbReference type="PIR" id="I48378">
    <property type="entry name" value="I48378"/>
</dbReference>
<dbReference type="RefSeq" id="NP_001366408.1">
    <property type="nucleotide sequence ID" value="NM_001379479.1"/>
</dbReference>
<dbReference type="RefSeq" id="NP_001411402.1">
    <property type="nucleotide sequence ID" value="NM_001424473.1"/>
</dbReference>
<dbReference type="RefSeq" id="NP_001411403.1">
    <property type="nucleotide sequence ID" value="NM_001424474.1"/>
</dbReference>
<dbReference type="RefSeq" id="NP_068677.2">
    <property type="nucleotide sequence ID" value="NM_021877.3"/>
</dbReference>
<dbReference type="RefSeq" id="XP_011243268.1">
    <property type="nucleotide sequence ID" value="XM_011244966.1"/>
</dbReference>
<dbReference type="RefSeq" id="XP_036014366.1">
    <property type="nucleotide sequence ID" value="XM_036158473.1"/>
</dbReference>
<dbReference type="SMR" id="Q61645"/>
<dbReference type="BioGRID" id="200415">
    <property type="interactions" value="3"/>
</dbReference>
<dbReference type="FunCoup" id="Q61645">
    <property type="interactions" value="363"/>
</dbReference>
<dbReference type="IntAct" id="Q61645">
    <property type="interactions" value="3"/>
</dbReference>
<dbReference type="STRING" id="10090.ENSMUSP00000124816"/>
<dbReference type="GlyGen" id="Q61645">
    <property type="glycosylation" value="2 sites"/>
</dbReference>
<dbReference type="iPTMnet" id="Q61645"/>
<dbReference type="PhosphoSitePlus" id="Q61645"/>
<dbReference type="PaxDb" id="10090-ENSMUSP00000022691"/>
<dbReference type="ProteomicsDB" id="269763"/>
<dbReference type="Antibodypedia" id="9297">
    <property type="antibodies" value="201 antibodies from 27 providers"/>
</dbReference>
<dbReference type="DNASU" id="15460"/>
<dbReference type="Ensembl" id="ENSMUST00000022691.14">
    <property type="protein sequence ID" value="ENSMUSP00000022691.8"/>
    <property type="gene ID" value="ENSMUSG00000022096.15"/>
</dbReference>
<dbReference type="Ensembl" id="ENSMUST00000161069.8">
    <property type="protein sequence ID" value="ENSMUSP00000124816.2"/>
    <property type="gene ID" value="ENSMUSG00000022096.15"/>
</dbReference>
<dbReference type="GeneID" id="15460"/>
<dbReference type="KEGG" id="mmu:15460"/>
<dbReference type="UCSC" id="uc007uoj.2">
    <property type="organism name" value="mouse"/>
</dbReference>
<dbReference type="AGR" id="MGI:96223"/>
<dbReference type="CTD" id="55806"/>
<dbReference type="MGI" id="MGI:96223">
    <property type="gene designation" value="Hr"/>
</dbReference>
<dbReference type="VEuPathDB" id="HostDB:ENSMUSG00000022096"/>
<dbReference type="eggNOG" id="KOG1356">
    <property type="taxonomic scope" value="Eukaryota"/>
</dbReference>
<dbReference type="GeneTree" id="ENSGT00940000161687"/>
<dbReference type="InParanoid" id="Q61645"/>
<dbReference type="PhylomeDB" id="Q61645"/>
<dbReference type="TreeFam" id="TF324723"/>
<dbReference type="BioGRID-ORCS" id="15460">
    <property type="hits" value="3 hits in 80 CRISPR screens"/>
</dbReference>
<dbReference type="ChiTaRS" id="Hr">
    <property type="organism name" value="mouse"/>
</dbReference>
<dbReference type="PRO" id="PR:Q61645"/>
<dbReference type="Proteomes" id="UP000000589">
    <property type="component" value="Chromosome 14"/>
</dbReference>
<dbReference type="RNAct" id="Q61645">
    <property type="molecule type" value="protein"/>
</dbReference>
<dbReference type="Bgee" id="ENSMUSG00000022096">
    <property type="expression patterns" value="Expressed in lip and 141 other cell types or tissues"/>
</dbReference>
<dbReference type="ExpressionAtlas" id="Q61645">
    <property type="expression patterns" value="baseline and differential"/>
</dbReference>
<dbReference type="GO" id="GO:0016604">
    <property type="term" value="C:nuclear body"/>
    <property type="evidence" value="ECO:0000314"/>
    <property type="project" value="MGI"/>
</dbReference>
<dbReference type="GO" id="GO:0003677">
    <property type="term" value="F:DNA binding"/>
    <property type="evidence" value="ECO:0007669"/>
    <property type="project" value="UniProtKB-KW"/>
</dbReference>
<dbReference type="GO" id="GO:0140683">
    <property type="term" value="F:histone H3K9me/H3K9me2 demethylase activity"/>
    <property type="evidence" value="ECO:0007669"/>
    <property type="project" value="UniProtKB-EC"/>
</dbReference>
<dbReference type="GO" id="GO:0003714">
    <property type="term" value="F:transcription corepressor activity"/>
    <property type="evidence" value="ECO:0000314"/>
    <property type="project" value="MGI"/>
</dbReference>
<dbReference type="GO" id="GO:0008270">
    <property type="term" value="F:zinc ion binding"/>
    <property type="evidence" value="ECO:0007669"/>
    <property type="project" value="UniProtKB-KW"/>
</dbReference>
<dbReference type="GO" id="GO:0045892">
    <property type="term" value="P:negative regulation of DNA-templated transcription"/>
    <property type="evidence" value="ECO:0000314"/>
    <property type="project" value="MGI"/>
</dbReference>
<dbReference type="FunFam" id="2.60.120.650:FF:000017">
    <property type="entry name" value="lysine-specific demethylase hairless isoform X1"/>
    <property type="match status" value="1"/>
</dbReference>
<dbReference type="Gene3D" id="2.60.120.650">
    <property type="entry name" value="Cupin"/>
    <property type="match status" value="1"/>
</dbReference>
<dbReference type="InterPro" id="IPR045109">
    <property type="entry name" value="JHDM2-like"/>
</dbReference>
<dbReference type="InterPro" id="IPR003347">
    <property type="entry name" value="JmjC_dom"/>
</dbReference>
<dbReference type="PANTHER" id="PTHR12549">
    <property type="entry name" value="JMJC DOMAIN-CONTAINING HISTONE DEMETHYLATION PROTEIN"/>
    <property type="match status" value="1"/>
</dbReference>
<dbReference type="PANTHER" id="PTHR12549:SF4">
    <property type="entry name" value="LYSINE-SPECIFIC DEMETHYLASE HAIRLESS"/>
    <property type="match status" value="1"/>
</dbReference>
<dbReference type="Pfam" id="PF02373">
    <property type="entry name" value="JmjC"/>
    <property type="match status" value="1"/>
</dbReference>
<dbReference type="SMART" id="SM00558">
    <property type="entry name" value="JmjC"/>
    <property type="match status" value="1"/>
</dbReference>
<dbReference type="SUPFAM" id="SSF51197">
    <property type="entry name" value="Clavaminate synthase-like"/>
    <property type="match status" value="1"/>
</dbReference>
<dbReference type="PROSITE" id="PS51184">
    <property type="entry name" value="JMJC"/>
    <property type="match status" value="1"/>
</dbReference>
<name>HAIR_MOUSE</name>
<proteinExistence type="evidence at transcript level"/>
<feature type="chain" id="PRO_0000083891" description="Lysine-specific demethylase hairless">
    <location>
        <begin position="1"/>
        <end position="1182"/>
    </location>
</feature>
<feature type="domain" description="JmjC" evidence="3">
    <location>
        <begin position="939"/>
        <end position="1150"/>
    </location>
</feature>
<feature type="zinc finger region" description="C6-type">
    <location>
        <begin position="595"/>
        <end position="620"/>
    </location>
</feature>
<feature type="region of interest" description="Disordered" evidence="4">
    <location>
        <begin position="227"/>
        <end position="257"/>
    </location>
</feature>
<feature type="region of interest" description="Disordered" evidence="4">
    <location>
        <begin position="302"/>
        <end position="380"/>
    </location>
</feature>
<feature type="region of interest" description="Disordered" evidence="4">
    <location>
        <begin position="411"/>
        <end position="443"/>
    </location>
</feature>
<feature type="region of interest" description="Disordered" evidence="4">
    <location>
        <begin position="507"/>
        <end position="546"/>
    </location>
</feature>
<feature type="region of interest" description="Disordered" evidence="4">
    <location>
        <begin position="697"/>
        <end position="746"/>
    </location>
</feature>
<feature type="short sequence motif" description="LXXLL motif 1">
    <location>
        <begin position="561"/>
        <end position="565"/>
    </location>
</feature>
<feature type="short sequence motif" description="LXXLL motif 2">
    <location>
        <begin position="753"/>
        <end position="757"/>
    </location>
</feature>
<feature type="compositionally biased region" description="Pro residues" evidence="4">
    <location>
        <begin position="307"/>
        <end position="321"/>
    </location>
</feature>
<feature type="compositionally biased region" description="Basic and acidic residues" evidence="4">
    <location>
        <begin position="722"/>
        <end position="731"/>
    </location>
</feature>
<feature type="binding site" evidence="3">
    <location>
        <position position="1000"/>
    </location>
    <ligand>
        <name>Fe cation</name>
        <dbReference type="ChEBI" id="CHEBI:24875"/>
        <note>catalytic</note>
    </ligand>
</feature>
<feature type="binding site" evidence="3">
    <location>
        <position position="1002"/>
    </location>
    <ligand>
        <name>Fe cation</name>
        <dbReference type="ChEBI" id="CHEBI:24875"/>
        <note>catalytic</note>
    </ligand>
</feature>
<feature type="binding site" evidence="3">
    <location>
        <position position="1118"/>
    </location>
    <ligand>
        <name>Fe cation</name>
        <dbReference type="ChEBI" id="CHEBI:24875"/>
        <note>catalytic</note>
    </ligand>
</feature>
<feature type="sequence conflict" description="In Ref. 1; CAA83587." evidence="5" ref="1">
    <original>P</original>
    <variation>S</variation>
    <location>
        <position position="401"/>
    </location>
</feature>
<accession>Q61645</accession>
<accession>Q80Y47</accession>
<sequence>MESMPSFLKDTPAWEKTAPVNGIVGQEPGTSPQDGLRHGALCLGEPAPFWRGVLSTPDSWLPPGFLQGPKDTLSLVEGEGPRNGERKGSWLGGKEGLRWKEAMLAHPLAFCGPACPPRYGPLIPEHSGGHPKSDPVAFRPLHCPFLLETKILERAPFWVPTCLPPYLMSSLPPERPYDWPLAPNPWVYSGSQPKVPSAFGLGSKGFYHKDPNILRPAKEPLAESGMLGLAPGGHLQQACESEGPSLHQRDGETGAGRQQNLCPVFLGYPDTVPRAPWPSCPPGLVHSLGNIWAGPGSNSLGYQLGPPATPRCPSPGPPTPPGGCCSSHLPAREGDLGPCRKCQDSPEGGSSGPGESSEERNKADSRACPPSHHTKLKKTWLTRHSEQFECPGGCSGKEESPATGLRALKRAGSPEVQGASRGPAPKRPSHPFPGTGRQGARAWQETPETIIGSKAEAEQQEEQRGPRDGRIRLQESRLVDTSCQHHLAGVTQCQSCVQAAGEVGVLTGHSQKSRRSPLEEKQLEEEDSSATSEEGGGGPGPEASLNKGLAKHLLSGLGDRLCRLLRKEREALAWAQREGQGPAMTEDSPGIPHCCSRCHHGLFNTHWRCSHCSHRLCVACGRIAGAGKNREKTGSQEQHTDDCAQEAGHAACSLILTQFVSSQALAELSTVMHQVWAKFDIRGHCFCQVDARVWAPGDGGQQKEPTEKTPPTPQPSCNGDSNRTKDIKEETPDSTESPAEDGAGRSPLPCPSLCELLASTAVKLCLGHDRIHMAFAPVTPALPSDDRITNILDSIIAQVVERKIQEKALGPGLRAGSGLRKGLSLPLSPVRTRLSPPGALLWLQEPRPKHGFHLFQEHWRQGQPVLVSGIQKTLRLSLWGMEALGTLGGQVQTLTALGPPQPTNLDSTAFWEGFSHPETRPKLDEGSVLLLHRTLGDKDASRVQNLASSLPLPEYCAHQGKLNLASYLPLGLTLHPLEPQLWAAYGVNSHRGHLGTKNLCVEVSDLISILVHAEAQLPPWYRAQKDFLSGLDGEGLWSPGSQTSTVWHVFRAQDAQRIRRFLQMVCPAGAGTLEPGAPGSCYLDAGLRRRLREEWGVSCWTLLQAPGEAVLVPAGAPHQVQGLVSTISVTQHFLSPETSALSAQLYHQGASLPPDHRMLYAQMDRAVFQAVKAAVGALQEAK</sequence>
<gene>
    <name type="primary">Hr</name>
</gene>